<sequence length="647" mass="73587">MLTWKNNLTPVSEQFDDIYFSPENGLEETKHVFIKGNDLYNRWRNWNIQNAFCILELGFGTGLNFLTTWKEYLEYKDRFRLHFISIEKFPLNREEISKALSIFSELVEIKKEFLSSYQDLIPGMNYFQFLGGKIHFSLFLGDVSSALCEISGKVDAIFLDGFAPSKNPEMWDKSVLENLKYVSKKGTTLSTFTVARMVRDSLSFSGFKLEKRPGFGRKREMLIGSYSDSFLESNPKEKPWCKRAYPELQIKTVAIVGAGIAGTTLAYSLSRRGIQVFLIDPSGIAKETSGIPMAISHPHLTKIPGPISLFTLRAFRYALSFLSSFADQNFFEKTGLFHSVTQEMDSERLQKGIENHKLSEEIVFWKPIASKFQNGDFLENEPGVFFRNGFWTRPESIAKKCAEQPGVEFIKGTASRIEQDGTSWKLLIQESGHEIVANSIIFCNSHSIGKLIASLFEGEEPFPIRKVRGQLISLKETEKSSRISNILCAEHYLTPSILGEHILGSTFDEFDLNPLPQKKDTDRLLEFVQNKYPSLNFDSSCVLIEKVGLRAQTPDRLPILGPVFDPREFRKIYKEIDLPKNRNKKFPNLKTIQGLYVFGGLGSRGILSSFLGSEIMASLILGEPVPVESSVLEHLHPARFLYRKVRK</sequence>
<name>MNMC_LEPIN</name>
<accession>Q8F0E4</accession>
<organism>
    <name type="scientific">Leptospira interrogans serogroup Icterohaemorrhagiae serovar Lai (strain 56601)</name>
    <dbReference type="NCBI Taxonomy" id="189518"/>
    <lineage>
        <taxon>Bacteria</taxon>
        <taxon>Pseudomonadati</taxon>
        <taxon>Spirochaetota</taxon>
        <taxon>Spirochaetia</taxon>
        <taxon>Leptospirales</taxon>
        <taxon>Leptospiraceae</taxon>
        <taxon>Leptospira</taxon>
    </lineage>
</organism>
<proteinExistence type="inferred from homology"/>
<protein>
    <recommendedName>
        <fullName evidence="1">tRNA 5-methylaminomethyl-2-thiouridine biosynthesis bifunctional protein MnmC</fullName>
        <shortName evidence="1">tRNA mnm(5)s(2)U biosynthesis bifunctional protein</shortName>
    </recommendedName>
    <domain>
        <recommendedName>
            <fullName evidence="1">tRNA (mnm(5)s(2)U34)-methyltransferase</fullName>
            <ecNumber evidence="1">2.1.1.61</ecNumber>
        </recommendedName>
    </domain>
    <domain>
        <recommendedName>
            <fullName evidence="1">FAD-dependent cmnm(5)s(2)U34 oxidoreductase</fullName>
            <ecNumber evidence="1">1.5.-.-</ecNumber>
        </recommendedName>
    </domain>
</protein>
<evidence type="ECO:0000255" key="1">
    <source>
        <dbReference type="HAMAP-Rule" id="MF_01102"/>
    </source>
</evidence>
<dbReference type="EC" id="2.1.1.61" evidence="1"/>
<dbReference type="EC" id="1.5.-.-" evidence="1"/>
<dbReference type="EMBL" id="AE010300">
    <property type="protein sequence ID" value="AAN50749.1"/>
    <property type="molecule type" value="Genomic_DNA"/>
</dbReference>
<dbReference type="RefSeq" id="NP_713731.1">
    <property type="nucleotide sequence ID" value="NC_004342.2"/>
</dbReference>
<dbReference type="RefSeq" id="WP_000958882.1">
    <property type="nucleotide sequence ID" value="NC_004342.2"/>
</dbReference>
<dbReference type="SMR" id="Q8F0E4"/>
<dbReference type="FunCoup" id="Q8F0E4">
    <property type="interactions" value="34"/>
</dbReference>
<dbReference type="STRING" id="189518.LA_3551"/>
<dbReference type="PaxDb" id="189518-LA_3551"/>
<dbReference type="EnsemblBacteria" id="AAN50749">
    <property type="protein sequence ID" value="AAN50749"/>
    <property type="gene ID" value="LA_3551"/>
</dbReference>
<dbReference type="KEGG" id="lil:LA_3551"/>
<dbReference type="PATRIC" id="fig|189518.3.peg.3521"/>
<dbReference type="HOGENOM" id="CLU_022427_1_0_12"/>
<dbReference type="InParanoid" id="Q8F0E4"/>
<dbReference type="OrthoDB" id="9786494at2"/>
<dbReference type="Proteomes" id="UP000001408">
    <property type="component" value="Chromosome I"/>
</dbReference>
<dbReference type="GO" id="GO:0005737">
    <property type="term" value="C:cytoplasm"/>
    <property type="evidence" value="ECO:0000318"/>
    <property type="project" value="GO_Central"/>
</dbReference>
<dbReference type="GO" id="GO:0050660">
    <property type="term" value="F:flavin adenine dinucleotide binding"/>
    <property type="evidence" value="ECO:0007669"/>
    <property type="project" value="UniProtKB-UniRule"/>
</dbReference>
<dbReference type="GO" id="GO:0016645">
    <property type="term" value="F:oxidoreductase activity, acting on the CH-NH group of donors"/>
    <property type="evidence" value="ECO:0007669"/>
    <property type="project" value="InterPro"/>
</dbReference>
<dbReference type="GO" id="GO:0004808">
    <property type="term" value="F:tRNA (5-methylaminomethyl-2-thiouridylate)(34)-methyltransferase activity"/>
    <property type="evidence" value="ECO:0007669"/>
    <property type="project" value="UniProtKB-EC"/>
</dbReference>
<dbReference type="GO" id="GO:0032259">
    <property type="term" value="P:methylation"/>
    <property type="evidence" value="ECO:0007669"/>
    <property type="project" value="UniProtKB-KW"/>
</dbReference>
<dbReference type="GO" id="GO:0002097">
    <property type="term" value="P:tRNA wobble base modification"/>
    <property type="evidence" value="ECO:0007669"/>
    <property type="project" value="UniProtKB-UniRule"/>
</dbReference>
<dbReference type="Gene3D" id="3.30.9.10">
    <property type="entry name" value="D-Amino Acid Oxidase, subunit A, domain 2"/>
    <property type="match status" value="1"/>
</dbReference>
<dbReference type="Gene3D" id="3.50.50.60">
    <property type="entry name" value="FAD/NAD(P)-binding domain"/>
    <property type="match status" value="1"/>
</dbReference>
<dbReference type="Gene3D" id="3.40.50.150">
    <property type="entry name" value="Vaccinia Virus protein VP39"/>
    <property type="match status" value="1"/>
</dbReference>
<dbReference type="HAMAP" id="MF_01102">
    <property type="entry name" value="MnmC"/>
    <property type="match status" value="1"/>
</dbReference>
<dbReference type="InterPro" id="IPR006076">
    <property type="entry name" value="FAD-dep_OxRdtase"/>
</dbReference>
<dbReference type="InterPro" id="IPR036188">
    <property type="entry name" value="FAD/NAD-bd_sf"/>
</dbReference>
<dbReference type="InterPro" id="IPR008471">
    <property type="entry name" value="MnmC-like_methylTransf"/>
</dbReference>
<dbReference type="InterPro" id="IPR029063">
    <property type="entry name" value="SAM-dependent_MTases_sf"/>
</dbReference>
<dbReference type="InterPro" id="IPR023032">
    <property type="entry name" value="tRNA_MAMT_biosynth_bifunc_MnmC"/>
</dbReference>
<dbReference type="InterPro" id="IPR047785">
    <property type="entry name" value="tRNA_MNMC2"/>
</dbReference>
<dbReference type="InterPro" id="IPR017610">
    <property type="entry name" value="tRNA_S-uridine_synth_MnmC_C"/>
</dbReference>
<dbReference type="NCBIfam" id="TIGR03197">
    <property type="entry name" value="MnmC_Cterm"/>
    <property type="match status" value="1"/>
</dbReference>
<dbReference type="NCBIfam" id="NF002481">
    <property type="entry name" value="PRK01747.1-2"/>
    <property type="match status" value="1"/>
</dbReference>
<dbReference type="NCBIfam" id="NF033855">
    <property type="entry name" value="tRNA_MNMC2"/>
    <property type="match status" value="1"/>
</dbReference>
<dbReference type="PANTHER" id="PTHR13847">
    <property type="entry name" value="SARCOSINE DEHYDROGENASE-RELATED"/>
    <property type="match status" value="1"/>
</dbReference>
<dbReference type="PANTHER" id="PTHR13847:SF283">
    <property type="entry name" value="TRNA 5-METHYLAMINOMETHYL-2-THIOURIDINE BIOSYNTHESIS BIFUNCTIONAL PROTEIN MNMC"/>
    <property type="match status" value="1"/>
</dbReference>
<dbReference type="Pfam" id="PF01266">
    <property type="entry name" value="DAO"/>
    <property type="match status" value="1"/>
</dbReference>
<dbReference type="Pfam" id="PF05430">
    <property type="entry name" value="Methyltransf_30"/>
    <property type="match status" value="1"/>
</dbReference>
<dbReference type="SUPFAM" id="SSF54373">
    <property type="entry name" value="FAD-linked reductases, C-terminal domain"/>
    <property type="match status" value="1"/>
</dbReference>
<dbReference type="SUPFAM" id="SSF51905">
    <property type="entry name" value="FAD/NAD(P)-binding domain"/>
    <property type="match status" value="1"/>
</dbReference>
<gene>
    <name evidence="1" type="primary">mnmC</name>
    <name type="ordered locus">LA_3551</name>
</gene>
<feature type="chain" id="PRO_0000347996" description="tRNA 5-methylaminomethyl-2-thiouridine biosynthesis bifunctional protein MnmC">
    <location>
        <begin position="1"/>
        <end position="647"/>
    </location>
</feature>
<feature type="region of interest" description="tRNA (mnm(5)s(2)U34)-methyltransferase">
    <location>
        <begin position="1"/>
        <end position="227"/>
    </location>
</feature>
<feature type="region of interest" description="FAD-dependent cmnm(5)s(2)U34 oxidoreductase">
    <location>
        <begin position="256"/>
        <end position="647"/>
    </location>
</feature>
<comment type="function">
    <text evidence="1">Catalyzes the last two steps in the biosynthesis of 5-methylaminomethyl-2-thiouridine (mnm(5)s(2)U) at the wobble position (U34) in tRNA. Catalyzes the FAD-dependent demodification of cmnm(5)s(2)U34 to nm(5)s(2)U34, followed by the transfer of a methyl group from S-adenosyl-L-methionine to nm(5)s(2)U34, to form mnm(5)s(2)U34.</text>
</comment>
<comment type="catalytic activity">
    <reaction evidence="1">
        <text>5-aminomethyl-2-thiouridine(34) in tRNA + S-adenosyl-L-methionine = 5-methylaminomethyl-2-thiouridine(34) in tRNA + S-adenosyl-L-homocysteine + H(+)</text>
        <dbReference type="Rhea" id="RHEA:19569"/>
        <dbReference type="Rhea" id="RHEA-COMP:10195"/>
        <dbReference type="Rhea" id="RHEA-COMP:10197"/>
        <dbReference type="ChEBI" id="CHEBI:15378"/>
        <dbReference type="ChEBI" id="CHEBI:57856"/>
        <dbReference type="ChEBI" id="CHEBI:59789"/>
        <dbReference type="ChEBI" id="CHEBI:74454"/>
        <dbReference type="ChEBI" id="CHEBI:74455"/>
        <dbReference type="EC" id="2.1.1.61"/>
    </reaction>
</comment>
<comment type="cofactor">
    <cofactor evidence="1">
        <name>FAD</name>
        <dbReference type="ChEBI" id="CHEBI:57692"/>
    </cofactor>
</comment>
<comment type="subcellular location">
    <subcellularLocation>
        <location evidence="1">Cytoplasm</location>
    </subcellularLocation>
</comment>
<comment type="similarity">
    <text evidence="1">In the N-terminal section; belongs to the methyltransferase superfamily. tRNA (mnm(5)s(2)U34)-methyltransferase family.</text>
</comment>
<comment type="similarity">
    <text evidence="1">In the C-terminal section; belongs to the DAO family.</text>
</comment>
<keyword id="KW-0963">Cytoplasm</keyword>
<keyword id="KW-0274">FAD</keyword>
<keyword id="KW-0285">Flavoprotein</keyword>
<keyword id="KW-0489">Methyltransferase</keyword>
<keyword id="KW-0511">Multifunctional enzyme</keyword>
<keyword id="KW-0560">Oxidoreductase</keyword>
<keyword id="KW-1185">Reference proteome</keyword>
<keyword id="KW-0949">S-adenosyl-L-methionine</keyword>
<keyword id="KW-0808">Transferase</keyword>
<keyword id="KW-0819">tRNA processing</keyword>
<reference key="1">
    <citation type="journal article" date="2003" name="Nature">
        <title>Unique physiological and pathogenic features of Leptospira interrogans revealed by whole-genome sequencing.</title>
        <authorList>
            <person name="Ren S.-X."/>
            <person name="Fu G."/>
            <person name="Jiang X.-G."/>
            <person name="Zeng R."/>
            <person name="Miao Y.-G."/>
            <person name="Xu H."/>
            <person name="Zhang Y.-X."/>
            <person name="Xiong H."/>
            <person name="Lu G."/>
            <person name="Lu L.-F."/>
            <person name="Jiang H.-Q."/>
            <person name="Jia J."/>
            <person name="Tu Y.-F."/>
            <person name="Jiang J.-X."/>
            <person name="Gu W.-Y."/>
            <person name="Zhang Y.-Q."/>
            <person name="Cai Z."/>
            <person name="Sheng H.-H."/>
            <person name="Yin H.-F."/>
            <person name="Zhang Y."/>
            <person name="Zhu G.-F."/>
            <person name="Wan M."/>
            <person name="Huang H.-L."/>
            <person name="Qian Z."/>
            <person name="Wang S.-Y."/>
            <person name="Ma W."/>
            <person name="Yao Z.-J."/>
            <person name="Shen Y."/>
            <person name="Qiang B.-Q."/>
            <person name="Xia Q.-C."/>
            <person name="Guo X.-K."/>
            <person name="Danchin A."/>
            <person name="Saint Girons I."/>
            <person name="Somerville R.L."/>
            <person name="Wen Y.-M."/>
            <person name="Shi M.-H."/>
            <person name="Chen Z."/>
            <person name="Xu J.-G."/>
            <person name="Zhao G.-P."/>
        </authorList>
    </citation>
    <scope>NUCLEOTIDE SEQUENCE [LARGE SCALE GENOMIC DNA]</scope>
    <source>
        <strain>56601</strain>
    </source>
</reference>